<keyword id="KW-0058">Aromatic hydrocarbons catabolism</keyword>
<keyword id="KW-0520">NAD</keyword>
<keyword id="KW-0560">Oxidoreductase</keyword>
<keyword id="KW-1185">Reference proteome</keyword>
<organism>
    <name type="scientific">Paraburkholderia xenovorans (strain LB400)</name>
    <dbReference type="NCBI Taxonomy" id="266265"/>
    <lineage>
        <taxon>Bacteria</taxon>
        <taxon>Pseudomonadati</taxon>
        <taxon>Pseudomonadota</taxon>
        <taxon>Betaproteobacteria</taxon>
        <taxon>Burkholderiales</taxon>
        <taxon>Burkholderiaceae</taxon>
        <taxon>Paraburkholderia</taxon>
    </lineage>
</organism>
<dbReference type="EC" id="1.2.1.10" evidence="1"/>
<dbReference type="EMBL" id="CP000270">
    <property type="protein sequence ID" value="ABE31797.1"/>
    <property type="molecule type" value="Genomic_DNA"/>
</dbReference>
<dbReference type="RefSeq" id="WP_011489334.1">
    <property type="nucleotide sequence ID" value="NZ_CP008760.1"/>
</dbReference>
<dbReference type="SMR" id="Q13VU2"/>
<dbReference type="STRING" id="266265.Bxe_A1151"/>
<dbReference type="KEGG" id="bxb:DR64_3310"/>
<dbReference type="KEGG" id="bxe:Bxe_A1151"/>
<dbReference type="eggNOG" id="COG4569">
    <property type="taxonomic scope" value="Bacteria"/>
</dbReference>
<dbReference type="OrthoDB" id="9786743at2"/>
<dbReference type="Proteomes" id="UP000001817">
    <property type="component" value="Chromosome 1"/>
</dbReference>
<dbReference type="GO" id="GO:0008774">
    <property type="term" value="F:acetaldehyde dehydrogenase (acetylating) activity"/>
    <property type="evidence" value="ECO:0007669"/>
    <property type="project" value="UniProtKB-UniRule"/>
</dbReference>
<dbReference type="GO" id="GO:0051287">
    <property type="term" value="F:NAD binding"/>
    <property type="evidence" value="ECO:0007669"/>
    <property type="project" value="UniProtKB-UniRule"/>
</dbReference>
<dbReference type="GO" id="GO:0009056">
    <property type="term" value="P:catabolic process"/>
    <property type="evidence" value="ECO:0007669"/>
    <property type="project" value="UniProtKB-KW"/>
</dbReference>
<dbReference type="CDD" id="cd23933">
    <property type="entry name" value="ALDH_C"/>
    <property type="match status" value="1"/>
</dbReference>
<dbReference type="Gene3D" id="3.30.360.10">
    <property type="entry name" value="Dihydrodipicolinate Reductase, domain 2"/>
    <property type="match status" value="1"/>
</dbReference>
<dbReference type="Gene3D" id="3.40.50.720">
    <property type="entry name" value="NAD(P)-binding Rossmann-like Domain"/>
    <property type="match status" value="1"/>
</dbReference>
<dbReference type="HAMAP" id="MF_01657">
    <property type="entry name" value="Ac_ald_DH_ac"/>
    <property type="match status" value="1"/>
</dbReference>
<dbReference type="InterPro" id="IPR003361">
    <property type="entry name" value="Acetaldehyde_dehydrogenase"/>
</dbReference>
<dbReference type="InterPro" id="IPR015426">
    <property type="entry name" value="Acetylaldehyde_DH_C"/>
</dbReference>
<dbReference type="InterPro" id="IPR036291">
    <property type="entry name" value="NAD(P)-bd_dom_sf"/>
</dbReference>
<dbReference type="InterPro" id="IPR000534">
    <property type="entry name" value="Semialdehyde_DH_NAD-bd"/>
</dbReference>
<dbReference type="NCBIfam" id="TIGR03215">
    <property type="entry name" value="ac_ald_DH_ac"/>
    <property type="match status" value="1"/>
</dbReference>
<dbReference type="NCBIfam" id="NF006157">
    <property type="entry name" value="PRK08300.1"/>
    <property type="match status" value="1"/>
</dbReference>
<dbReference type="Pfam" id="PF09290">
    <property type="entry name" value="AcetDehyd-dimer"/>
    <property type="match status" value="1"/>
</dbReference>
<dbReference type="Pfam" id="PF01118">
    <property type="entry name" value="Semialdhyde_dh"/>
    <property type="match status" value="1"/>
</dbReference>
<dbReference type="PIRSF" id="PIRSF015689">
    <property type="entry name" value="Actaldh_dh_actl"/>
    <property type="match status" value="1"/>
</dbReference>
<dbReference type="SMART" id="SM00859">
    <property type="entry name" value="Semialdhyde_dh"/>
    <property type="match status" value="1"/>
</dbReference>
<dbReference type="SUPFAM" id="SSF55347">
    <property type="entry name" value="Glyceraldehyde-3-phosphate dehydrogenase-like, C-terminal domain"/>
    <property type="match status" value="1"/>
</dbReference>
<dbReference type="SUPFAM" id="SSF51735">
    <property type="entry name" value="NAD(P)-binding Rossmann-fold domains"/>
    <property type="match status" value="1"/>
</dbReference>
<comment type="catalytic activity">
    <reaction evidence="1">
        <text>acetaldehyde + NAD(+) + CoA = acetyl-CoA + NADH + H(+)</text>
        <dbReference type="Rhea" id="RHEA:23288"/>
        <dbReference type="ChEBI" id="CHEBI:15343"/>
        <dbReference type="ChEBI" id="CHEBI:15378"/>
        <dbReference type="ChEBI" id="CHEBI:57287"/>
        <dbReference type="ChEBI" id="CHEBI:57288"/>
        <dbReference type="ChEBI" id="CHEBI:57540"/>
        <dbReference type="ChEBI" id="CHEBI:57945"/>
        <dbReference type="EC" id="1.2.1.10"/>
    </reaction>
</comment>
<comment type="similarity">
    <text evidence="1">Belongs to the acetaldehyde dehydrogenase family.</text>
</comment>
<protein>
    <recommendedName>
        <fullName evidence="1">Acetaldehyde dehydrogenase 2</fullName>
        <ecNumber evidence="1">1.2.1.10</ecNumber>
    </recommendedName>
    <alternativeName>
        <fullName evidence="1">Acetaldehyde dehydrogenase [acetylating] 2</fullName>
    </alternativeName>
</protein>
<evidence type="ECO:0000255" key="1">
    <source>
        <dbReference type="HAMAP-Rule" id="MF_01657"/>
    </source>
</evidence>
<reference key="1">
    <citation type="journal article" date="2006" name="Proc. Natl. Acad. Sci. U.S.A.">
        <title>Burkholderia xenovorans LB400 harbors a multi-replicon, 9.73-Mbp genome shaped for versatility.</title>
        <authorList>
            <person name="Chain P.S.G."/>
            <person name="Denef V.J."/>
            <person name="Konstantinidis K.T."/>
            <person name="Vergez L.M."/>
            <person name="Agullo L."/>
            <person name="Reyes V.L."/>
            <person name="Hauser L."/>
            <person name="Cordova M."/>
            <person name="Gomez L."/>
            <person name="Gonzalez M."/>
            <person name="Land M."/>
            <person name="Lao V."/>
            <person name="Larimer F."/>
            <person name="LiPuma J.J."/>
            <person name="Mahenthiralingam E."/>
            <person name="Malfatti S.A."/>
            <person name="Marx C.J."/>
            <person name="Parnell J.J."/>
            <person name="Ramette A."/>
            <person name="Richardson P."/>
            <person name="Seeger M."/>
            <person name="Smith D."/>
            <person name="Spilker T."/>
            <person name="Sul W.J."/>
            <person name="Tsoi T.V."/>
            <person name="Ulrich L.E."/>
            <person name="Zhulin I.B."/>
            <person name="Tiedje J.M."/>
        </authorList>
    </citation>
    <scope>NUCLEOTIDE SEQUENCE [LARGE SCALE GENOMIC DNA]</scope>
    <source>
        <strain>LB400</strain>
    </source>
</reference>
<feature type="chain" id="PRO_0000387645" description="Acetaldehyde dehydrogenase 2">
    <location>
        <begin position="1"/>
        <end position="313"/>
    </location>
</feature>
<feature type="active site" description="Acyl-thioester intermediate" evidence="1">
    <location>
        <position position="132"/>
    </location>
</feature>
<feature type="binding site" evidence="1">
    <location>
        <begin position="12"/>
        <end position="15"/>
    </location>
    <ligand>
        <name>NAD(+)</name>
        <dbReference type="ChEBI" id="CHEBI:57540"/>
    </ligand>
</feature>
<feature type="binding site" evidence="1">
    <location>
        <begin position="163"/>
        <end position="171"/>
    </location>
    <ligand>
        <name>NAD(+)</name>
        <dbReference type="ChEBI" id="CHEBI:57540"/>
    </ligand>
</feature>
<feature type="binding site" evidence="1">
    <location>
        <position position="287"/>
    </location>
    <ligand>
        <name>NAD(+)</name>
        <dbReference type="ChEBI" id="CHEBI:57540"/>
    </ligand>
</feature>
<accession>Q13VU2</accession>
<sequence length="313" mass="32856">MTRKFKAAIIGSGNIGTDLMIKIMRHGRHIEVGAMVGIDPASDGLARASRLGVGTTHEGVEGLTRLPIFEEIDFVFDATSAGAHVHNDALLRKYKPGIRVIDLTPAAIGPYCIPVVNGKQNLDALNVNMVTCGGQATVPMVAAVSRVTQVHYGEIVASIASKSAGPGTRANIDEFTETTSKAIEVVGGASKGKAIIVLNPADPPLIMRDTVYTLSDVADEAAIADSVARMAADVQSYVPGYRLKQTVQFDRVENLNVPGVGRISGLKTSIFLEVEGAAHYLPAYAGNLDIMTSAGLRTAEQMAARMTAGTVAA</sequence>
<name>ACDH2_PARXL</name>
<proteinExistence type="inferred from homology"/>
<gene>
    <name type="primary">amnH</name>
    <name type="ordered locus">Bxeno_A3259</name>
    <name type="ORF">Bxe_A1151</name>
</gene>